<sequence>MLETGAIWGITGTTVTSFMFFWAIYKQYVPAHFRAYVERYFHKMIGWISYYVDIKFTEYTDEGLKRSQAYDSIRNYLASKSTALAKRLKANETKNSKSLVFSMDDHEEIEDEFEGVKVKWYSNVKVIQPQSNYGQRSSEERRHFTLSFHRRHRGMIIETYLDHVLREGKAIGLMNRERKLYTNNSSQEWYPWRSGKWSNVPFHHPATFETLAMDPEKKEGIKKDLIKFSKGKDYYKKVGKPWKRGYLLFGPPGTGKSTMIAAIANFLDYDVYDLELTTVKDNSELKKLLLDTTSKSIIVIEDIDCSLDLTGQRKKKKEEDEEEDGEEKKEGEKKPKVDDKQSKVTLSGLLNSIDGLWSACSGEKIIVFTTNFVDKLDPALIRRGRMDNHIEMSYCKFEAFKVLAKNYLEIETHDLYGEIERKLEETDMSPADVAETLMPKSDEEDADICIKRLVKTLEEEKEKARKLAEEEEKKKAEKEAKKMKKAEEAEEKKKKTEEDEKKEKVKAKEENGNVSQQNGNSIDLNKKSDS</sequence>
<name>AATP5_ARATH</name>
<gene>
    <name evidence="5" type="ordered locus">At3g28510</name>
    <name evidence="6" type="ORF">T20D4.2</name>
</gene>
<keyword id="KW-0067">ATP-binding</keyword>
<keyword id="KW-0378">Hydrolase</keyword>
<keyword id="KW-0460">Magnesium</keyword>
<keyword id="KW-0472">Membrane</keyword>
<keyword id="KW-0547">Nucleotide-binding</keyword>
<keyword id="KW-1185">Reference proteome</keyword>
<keyword id="KW-0812">Transmembrane</keyword>
<keyword id="KW-1133">Transmembrane helix</keyword>
<protein>
    <recommendedName>
        <fullName>AAA-ATPase At3g28510</fullName>
        <ecNumber evidence="1">3.6.1.-</ecNumber>
    </recommendedName>
</protein>
<dbReference type="EC" id="3.6.1.-" evidence="1"/>
<dbReference type="EMBL" id="AP002059">
    <property type="protein sequence ID" value="BAB01953.1"/>
    <property type="molecule type" value="Genomic_DNA"/>
</dbReference>
<dbReference type="EMBL" id="CP002686">
    <property type="protein sequence ID" value="AEE77454.1"/>
    <property type="molecule type" value="Genomic_DNA"/>
</dbReference>
<dbReference type="EMBL" id="AY099692">
    <property type="protein sequence ID" value="AAM20543.1"/>
    <property type="molecule type" value="mRNA"/>
</dbReference>
<dbReference type="RefSeq" id="NP_189492.1">
    <property type="nucleotide sequence ID" value="NM_113771.4"/>
</dbReference>
<dbReference type="SMR" id="Q9LH84"/>
<dbReference type="FunCoup" id="Q9LH84">
    <property type="interactions" value="1338"/>
</dbReference>
<dbReference type="STRING" id="3702.Q9LH84"/>
<dbReference type="iPTMnet" id="Q9LH84"/>
<dbReference type="SwissPalm" id="Q9LH84"/>
<dbReference type="PaxDb" id="3702-AT3G28510.1"/>
<dbReference type="ProteomicsDB" id="244339"/>
<dbReference type="EnsemblPlants" id="AT3G28510.1">
    <property type="protein sequence ID" value="AT3G28510.1"/>
    <property type="gene ID" value="AT3G28510"/>
</dbReference>
<dbReference type="GeneID" id="822481"/>
<dbReference type="Gramene" id="AT3G28510.1">
    <property type="protein sequence ID" value="AT3G28510.1"/>
    <property type="gene ID" value="AT3G28510"/>
</dbReference>
<dbReference type="KEGG" id="ath:AT3G28510"/>
<dbReference type="Araport" id="AT3G28510"/>
<dbReference type="TAIR" id="AT3G28510"/>
<dbReference type="eggNOG" id="KOG0743">
    <property type="taxonomic scope" value="Eukaryota"/>
</dbReference>
<dbReference type="HOGENOM" id="CLU_010189_0_1_1"/>
<dbReference type="InParanoid" id="Q9LH84"/>
<dbReference type="OMA" id="MAMMDKW"/>
<dbReference type="PhylomeDB" id="Q9LH84"/>
<dbReference type="PRO" id="PR:Q9LH84"/>
<dbReference type="Proteomes" id="UP000006548">
    <property type="component" value="Chromosome 3"/>
</dbReference>
<dbReference type="ExpressionAtlas" id="Q9LH84">
    <property type="expression patterns" value="baseline and differential"/>
</dbReference>
<dbReference type="GO" id="GO:0005783">
    <property type="term" value="C:endoplasmic reticulum"/>
    <property type="evidence" value="ECO:0007005"/>
    <property type="project" value="TAIR"/>
</dbReference>
<dbReference type="GO" id="GO:0016020">
    <property type="term" value="C:membrane"/>
    <property type="evidence" value="ECO:0007669"/>
    <property type="project" value="UniProtKB-SubCell"/>
</dbReference>
<dbReference type="GO" id="GO:0005524">
    <property type="term" value="F:ATP binding"/>
    <property type="evidence" value="ECO:0007669"/>
    <property type="project" value="UniProtKB-KW"/>
</dbReference>
<dbReference type="GO" id="GO:0016887">
    <property type="term" value="F:ATP hydrolysis activity"/>
    <property type="evidence" value="ECO:0007669"/>
    <property type="project" value="InterPro"/>
</dbReference>
<dbReference type="GO" id="GO:0006950">
    <property type="term" value="P:response to stress"/>
    <property type="evidence" value="ECO:0007669"/>
    <property type="project" value="UniProtKB-ARBA"/>
</dbReference>
<dbReference type="CDD" id="cd19510">
    <property type="entry name" value="RecA-like_BCS1"/>
    <property type="match status" value="1"/>
</dbReference>
<dbReference type="FunFam" id="3.40.50.300:FF:001122">
    <property type="entry name" value="AAA-ATPase ASD, mitochondrial"/>
    <property type="match status" value="1"/>
</dbReference>
<dbReference type="Gene3D" id="6.10.280.40">
    <property type="match status" value="1"/>
</dbReference>
<dbReference type="Gene3D" id="3.40.50.300">
    <property type="entry name" value="P-loop containing nucleotide triphosphate hydrolases"/>
    <property type="match status" value="1"/>
</dbReference>
<dbReference type="InterPro" id="IPR003593">
    <property type="entry name" value="AAA+_ATPase"/>
</dbReference>
<dbReference type="InterPro" id="IPR025753">
    <property type="entry name" value="AAA_N_dom"/>
</dbReference>
<dbReference type="InterPro" id="IPR003959">
    <property type="entry name" value="ATPase_AAA_core"/>
</dbReference>
<dbReference type="InterPro" id="IPR050747">
    <property type="entry name" value="Mitochondrial_chaperone_BCS1"/>
</dbReference>
<dbReference type="InterPro" id="IPR027417">
    <property type="entry name" value="P-loop_NTPase"/>
</dbReference>
<dbReference type="PANTHER" id="PTHR23070">
    <property type="entry name" value="BCS1 AAA-TYPE ATPASE"/>
    <property type="match status" value="1"/>
</dbReference>
<dbReference type="Pfam" id="PF00004">
    <property type="entry name" value="AAA"/>
    <property type="match status" value="1"/>
</dbReference>
<dbReference type="Pfam" id="PF14363">
    <property type="entry name" value="AAA_assoc"/>
    <property type="match status" value="1"/>
</dbReference>
<dbReference type="SMART" id="SM00382">
    <property type="entry name" value="AAA"/>
    <property type="match status" value="1"/>
</dbReference>
<dbReference type="SUPFAM" id="SSF52540">
    <property type="entry name" value="P-loop containing nucleoside triphosphate hydrolases"/>
    <property type="match status" value="1"/>
</dbReference>
<accession>Q9LH84</accession>
<proteinExistence type="evidence at transcript level"/>
<comment type="catalytic activity">
    <reaction evidence="1">
        <text>ATP + H2O = ADP + phosphate + H(+)</text>
        <dbReference type="Rhea" id="RHEA:13065"/>
        <dbReference type="ChEBI" id="CHEBI:15377"/>
        <dbReference type="ChEBI" id="CHEBI:15378"/>
        <dbReference type="ChEBI" id="CHEBI:30616"/>
        <dbReference type="ChEBI" id="CHEBI:43474"/>
        <dbReference type="ChEBI" id="CHEBI:456216"/>
    </reaction>
</comment>
<comment type="cofactor">
    <cofactor evidence="1">
        <name>Mg(2+)</name>
        <dbReference type="ChEBI" id="CHEBI:18420"/>
    </cofactor>
</comment>
<comment type="subcellular location">
    <subcellularLocation>
        <location evidence="2">Membrane</location>
        <topology evidence="2">Single-pass membrane protein</topology>
    </subcellularLocation>
</comment>
<comment type="similarity">
    <text evidence="4">Belongs to the AAA ATPase family. BCS1 subfamily.</text>
</comment>
<reference key="1">
    <citation type="journal article" date="2000" name="DNA Res.">
        <title>Structural analysis of Arabidopsis thaliana chromosome 3. II. Sequence features of the 4,251,695 bp regions covered by 90 P1, TAC and BAC clones.</title>
        <authorList>
            <person name="Kaneko T."/>
            <person name="Katoh T."/>
            <person name="Sato S."/>
            <person name="Nakamura Y."/>
            <person name="Asamizu E."/>
            <person name="Tabata S."/>
        </authorList>
    </citation>
    <scope>NUCLEOTIDE SEQUENCE [LARGE SCALE GENOMIC DNA]</scope>
    <source>
        <strain>cv. Columbia</strain>
    </source>
</reference>
<reference key="2">
    <citation type="journal article" date="2017" name="Plant J.">
        <title>Araport11: a complete reannotation of the Arabidopsis thaliana reference genome.</title>
        <authorList>
            <person name="Cheng C.Y."/>
            <person name="Krishnakumar V."/>
            <person name="Chan A.P."/>
            <person name="Thibaud-Nissen F."/>
            <person name="Schobel S."/>
            <person name="Town C.D."/>
        </authorList>
    </citation>
    <scope>GENOME REANNOTATION</scope>
    <source>
        <strain>cv. Columbia</strain>
    </source>
</reference>
<reference key="3">
    <citation type="journal article" date="2003" name="Science">
        <title>Empirical analysis of transcriptional activity in the Arabidopsis genome.</title>
        <authorList>
            <person name="Yamada K."/>
            <person name="Lim J."/>
            <person name="Dale J.M."/>
            <person name="Chen H."/>
            <person name="Shinn P."/>
            <person name="Palm C.J."/>
            <person name="Southwick A.M."/>
            <person name="Wu H.C."/>
            <person name="Kim C.J."/>
            <person name="Nguyen M."/>
            <person name="Pham P.K."/>
            <person name="Cheuk R.F."/>
            <person name="Karlin-Newmann G."/>
            <person name="Liu S.X."/>
            <person name="Lam B."/>
            <person name="Sakano H."/>
            <person name="Wu T."/>
            <person name="Yu G."/>
            <person name="Miranda M."/>
            <person name="Quach H.L."/>
            <person name="Tripp M."/>
            <person name="Chang C.H."/>
            <person name="Lee J.M."/>
            <person name="Toriumi M.J."/>
            <person name="Chan M.M."/>
            <person name="Tang C.C."/>
            <person name="Onodera C.S."/>
            <person name="Deng J.M."/>
            <person name="Akiyama K."/>
            <person name="Ansari Y."/>
            <person name="Arakawa T."/>
            <person name="Banh J."/>
            <person name="Banno F."/>
            <person name="Bowser L."/>
            <person name="Brooks S.Y."/>
            <person name="Carninci P."/>
            <person name="Chao Q."/>
            <person name="Choy N."/>
            <person name="Enju A."/>
            <person name="Goldsmith A.D."/>
            <person name="Gurjal M."/>
            <person name="Hansen N.F."/>
            <person name="Hayashizaki Y."/>
            <person name="Johnson-Hopson C."/>
            <person name="Hsuan V.W."/>
            <person name="Iida K."/>
            <person name="Karnes M."/>
            <person name="Khan S."/>
            <person name="Koesema E."/>
            <person name="Ishida J."/>
            <person name="Jiang P.X."/>
            <person name="Jones T."/>
            <person name="Kawai J."/>
            <person name="Kamiya A."/>
            <person name="Meyers C."/>
            <person name="Nakajima M."/>
            <person name="Narusaka M."/>
            <person name="Seki M."/>
            <person name="Sakurai T."/>
            <person name="Satou M."/>
            <person name="Tamse R."/>
            <person name="Vaysberg M."/>
            <person name="Wallender E.K."/>
            <person name="Wong C."/>
            <person name="Yamamura Y."/>
            <person name="Yuan S."/>
            <person name="Shinozaki K."/>
            <person name="Davis R.W."/>
            <person name="Theologis A."/>
            <person name="Ecker J.R."/>
        </authorList>
    </citation>
    <scope>NUCLEOTIDE SEQUENCE [LARGE SCALE MRNA]</scope>
    <source>
        <strain>cv. Columbia</strain>
    </source>
</reference>
<organism evidence="7">
    <name type="scientific">Arabidopsis thaliana</name>
    <name type="common">Mouse-ear cress</name>
    <dbReference type="NCBI Taxonomy" id="3702"/>
    <lineage>
        <taxon>Eukaryota</taxon>
        <taxon>Viridiplantae</taxon>
        <taxon>Streptophyta</taxon>
        <taxon>Embryophyta</taxon>
        <taxon>Tracheophyta</taxon>
        <taxon>Spermatophyta</taxon>
        <taxon>Magnoliopsida</taxon>
        <taxon>eudicotyledons</taxon>
        <taxon>Gunneridae</taxon>
        <taxon>Pentapetalae</taxon>
        <taxon>rosids</taxon>
        <taxon>malvids</taxon>
        <taxon>Brassicales</taxon>
        <taxon>Brassicaceae</taxon>
        <taxon>Camelineae</taxon>
        <taxon>Arabidopsis</taxon>
    </lineage>
</organism>
<feature type="chain" id="PRO_0000434707" description="AAA-ATPase At3g28510">
    <location>
        <begin position="1"/>
        <end position="530"/>
    </location>
</feature>
<feature type="transmembrane region" description="Helical" evidence="2">
    <location>
        <begin position="5"/>
        <end position="25"/>
    </location>
</feature>
<feature type="region of interest" description="Disordered" evidence="3">
    <location>
        <begin position="312"/>
        <end position="339"/>
    </location>
</feature>
<feature type="region of interest" description="Disordered" evidence="3">
    <location>
        <begin position="463"/>
        <end position="530"/>
    </location>
</feature>
<feature type="compositionally biased region" description="Basic and acidic residues" evidence="3">
    <location>
        <begin position="326"/>
        <end position="339"/>
    </location>
</feature>
<feature type="compositionally biased region" description="Basic and acidic residues" evidence="3">
    <location>
        <begin position="463"/>
        <end position="511"/>
    </location>
</feature>
<feature type="compositionally biased region" description="Polar residues" evidence="3">
    <location>
        <begin position="512"/>
        <end position="523"/>
    </location>
</feature>
<feature type="binding site" evidence="2">
    <location>
        <begin position="250"/>
        <end position="257"/>
    </location>
    <ligand>
        <name>ATP</name>
        <dbReference type="ChEBI" id="CHEBI:30616"/>
    </ligand>
</feature>
<evidence type="ECO:0000250" key="1">
    <source>
        <dbReference type="UniProtKB" id="Q9FLD5"/>
    </source>
</evidence>
<evidence type="ECO:0000255" key="2"/>
<evidence type="ECO:0000256" key="3">
    <source>
        <dbReference type="SAM" id="MobiDB-lite"/>
    </source>
</evidence>
<evidence type="ECO:0000305" key="4"/>
<evidence type="ECO:0000312" key="5">
    <source>
        <dbReference type="EMBL" id="AAM20543.1"/>
    </source>
</evidence>
<evidence type="ECO:0000312" key="6">
    <source>
        <dbReference type="EMBL" id="BAB01953.1"/>
    </source>
</evidence>
<evidence type="ECO:0000312" key="7">
    <source>
        <dbReference type="Proteomes" id="UP000006548"/>
    </source>
</evidence>